<sequence length="281" mass="29453">MGAIMLDGKATRDEIFGDLKPRVAALDAAGRTPGLGTILVGDDPGSQAYVRGKHADCAKVGITSIRRDLPADISTATLNETIDELNANPDCTGYIVQLPLPKHLDENAALERVDPAKDADGLHPTNLGRLVLGTPAPLPCTPRGIVHLLRRYDISIAGAHVVVIGRGVTVGRPLGLLLTRRSENATVTLCHTGTRDLPALTRQADIVVAAVGVAHLLTADMVRPGAAVIDVGVSRTDDGLVGDVHPDVWELAGHVSPNPGGVGPLTRAFLLTNVVELAERR</sequence>
<keyword id="KW-0028">Amino-acid biosynthesis</keyword>
<keyword id="KW-0368">Histidine biosynthesis</keyword>
<keyword id="KW-0378">Hydrolase</keyword>
<keyword id="KW-0486">Methionine biosynthesis</keyword>
<keyword id="KW-0511">Multifunctional enzyme</keyword>
<keyword id="KW-0521">NADP</keyword>
<keyword id="KW-0554">One-carbon metabolism</keyword>
<keyword id="KW-0560">Oxidoreductase</keyword>
<keyword id="KW-0658">Purine biosynthesis</keyword>
<comment type="function">
    <text evidence="1">Catalyzes the oxidation of 5,10-methylenetetrahydrofolate to 5,10-methenyltetrahydrofolate and then the hydrolysis of 5,10-methenyltetrahydrofolate to 10-formyltetrahydrofolate.</text>
</comment>
<comment type="catalytic activity">
    <reaction evidence="1">
        <text>(6R)-5,10-methylene-5,6,7,8-tetrahydrofolate + NADP(+) = (6R)-5,10-methenyltetrahydrofolate + NADPH</text>
        <dbReference type="Rhea" id="RHEA:22812"/>
        <dbReference type="ChEBI" id="CHEBI:15636"/>
        <dbReference type="ChEBI" id="CHEBI:57455"/>
        <dbReference type="ChEBI" id="CHEBI:57783"/>
        <dbReference type="ChEBI" id="CHEBI:58349"/>
        <dbReference type="EC" id="1.5.1.5"/>
    </reaction>
</comment>
<comment type="catalytic activity">
    <reaction evidence="1">
        <text>(6R)-5,10-methenyltetrahydrofolate + H2O = (6R)-10-formyltetrahydrofolate + H(+)</text>
        <dbReference type="Rhea" id="RHEA:23700"/>
        <dbReference type="ChEBI" id="CHEBI:15377"/>
        <dbReference type="ChEBI" id="CHEBI:15378"/>
        <dbReference type="ChEBI" id="CHEBI:57455"/>
        <dbReference type="ChEBI" id="CHEBI:195366"/>
        <dbReference type="EC" id="3.5.4.9"/>
    </reaction>
</comment>
<comment type="pathway">
    <text evidence="1">One-carbon metabolism; tetrahydrofolate interconversion.</text>
</comment>
<comment type="subunit">
    <text evidence="1">Homodimer.</text>
</comment>
<comment type="similarity">
    <text evidence="1">Belongs to the tetrahydrofolate dehydrogenase/cyclohydrolase family.</text>
</comment>
<accession>C1AHH2</accession>
<name>FOLD_MYCBT</name>
<reference key="1">
    <citation type="journal article" date="2009" name="Vaccine">
        <title>Whole genome sequence analysis of Mycobacterium bovis bacillus Calmette-Guerin (BCG) Tokyo 172: a comparative study of BCG vaccine substrains.</title>
        <authorList>
            <person name="Seki M."/>
            <person name="Honda I."/>
            <person name="Fujita I."/>
            <person name="Yano I."/>
            <person name="Yamamoto S."/>
            <person name="Koyama A."/>
        </authorList>
    </citation>
    <scope>NUCLEOTIDE SEQUENCE [LARGE SCALE GENOMIC DNA]</scope>
    <source>
        <strain>BCG / Tokyo 172 / ATCC 35737 / TMC 1019</strain>
    </source>
</reference>
<protein>
    <recommendedName>
        <fullName evidence="1">Bifunctional protein FolD</fullName>
    </recommendedName>
    <domain>
        <recommendedName>
            <fullName evidence="1">Methylenetetrahydrofolate dehydrogenase</fullName>
            <ecNumber evidence="1">1.5.1.5</ecNumber>
        </recommendedName>
    </domain>
    <domain>
        <recommendedName>
            <fullName evidence="1">Methenyltetrahydrofolate cyclohydrolase</fullName>
            <ecNumber evidence="1">3.5.4.9</ecNumber>
        </recommendedName>
    </domain>
</protein>
<organism>
    <name type="scientific">Mycobacterium bovis (strain BCG / Tokyo 172 / ATCC 35737 / TMC 1019)</name>
    <dbReference type="NCBI Taxonomy" id="561275"/>
    <lineage>
        <taxon>Bacteria</taxon>
        <taxon>Bacillati</taxon>
        <taxon>Actinomycetota</taxon>
        <taxon>Actinomycetes</taxon>
        <taxon>Mycobacteriales</taxon>
        <taxon>Mycobacteriaceae</taxon>
        <taxon>Mycobacterium</taxon>
        <taxon>Mycobacterium tuberculosis complex</taxon>
    </lineage>
</organism>
<gene>
    <name evidence="1" type="primary">folD</name>
    <name type="ordered locus">JTY_3428</name>
</gene>
<dbReference type="EC" id="1.5.1.5" evidence="1"/>
<dbReference type="EC" id="3.5.4.9" evidence="1"/>
<dbReference type="EMBL" id="AP010918">
    <property type="protein sequence ID" value="BAH27701.1"/>
    <property type="molecule type" value="Genomic_DNA"/>
</dbReference>
<dbReference type="RefSeq" id="WP_010950877.1">
    <property type="nucleotide sequence ID" value="NZ_CP014566.1"/>
</dbReference>
<dbReference type="SMR" id="C1AHH2"/>
<dbReference type="KEGG" id="mbt:JTY_3428"/>
<dbReference type="HOGENOM" id="CLU_034045_3_0_11"/>
<dbReference type="UniPathway" id="UPA00193"/>
<dbReference type="GO" id="GO:0005829">
    <property type="term" value="C:cytosol"/>
    <property type="evidence" value="ECO:0007669"/>
    <property type="project" value="TreeGrafter"/>
</dbReference>
<dbReference type="GO" id="GO:0004477">
    <property type="term" value="F:methenyltetrahydrofolate cyclohydrolase activity"/>
    <property type="evidence" value="ECO:0007669"/>
    <property type="project" value="UniProtKB-UniRule"/>
</dbReference>
<dbReference type="GO" id="GO:0004488">
    <property type="term" value="F:methylenetetrahydrofolate dehydrogenase (NADP+) activity"/>
    <property type="evidence" value="ECO:0007669"/>
    <property type="project" value="UniProtKB-UniRule"/>
</dbReference>
<dbReference type="GO" id="GO:0000105">
    <property type="term" value="P:L-histidine biosynthetic process"/>
    <property type="evidence" value="ECO:0007669"/>
    <property type="project" value="UniProtKB-KW"/>
</dbReference>
<dbReference type="GO" id="GO:0009086">
    <property type="term" value="P:methionine biosynthetic process"/>
    <property type="evidence" value="ECO:0007669"/>
    <property type="project" value="UniProtKB-KW"/>
</dbReference>
<dbReference type="GO" id="GO:0006164">
    <property type="term" value="P:purine nucleotide biosynthetic process"/>
    <property type="evidence" value="ECO:0007669"/>
    <property type="project" value="UniProtKB-KW"/>
</dbReference>
<dbReference type="GO" id="GO:0035999">
    <property type="term" value="P:tetrahydrofolate interconversion"/>
    <property type="evidence" value="ECO:0007669"/>
    <property type="project" value="UniProtKB-UniRule"/>
</dbReference>
<dbReference type="CDD" id="cd01080">
    <property type="entry name" value="NAD_bind_m-THF_DH_Cyclohyd"/>
    <property type="match status" value="1"/>
</dbReference>
<dbReference type="FunFam" id="3.40.50.720:FF:000094">
    <property type="entry name" value="Bifunctional protein FolD"/>
    <property type="match status" value="1"/>
</dbReference>
<dbReference type="FunFam" id="3.40.50.10860:FF:000005">
    <property type="entry name" value="C-1-tetrahydrofolate synthase, cytoplasmic, putative"/>
    <property type="match status" value="1"/>
</dbReference>
<dbReference type="Gene3D" id="3.40.50.10860">
    <property type="entry name" value="Leucine Dehydrogenase, chain A, domain 1"/>
    <property type="match status" value="1"/>
</dbReference>
<dbReference type="Gene3D" id="3.40.50.720">
    <property type="entry name" value="NAD(P)-binding Rossmann-like Domain"/>
    <property type="match status" value="1"/>
</dbReference>
<dbReference type="HAMAP" id="MF_01576">
    <property type="entry name" value="THF_DHG_CYH"/>
    <property type="match status" value="1"/>
</dbReference>
<dbReference type="InterPro" id="IPR046346">
    <property type="entry name" value="Aminoacid_DH-like_N_sf"/>
</dbReference>
<dbReference type="InterPro" id="IPR036291">
    <property type="entry name" value="NAD(P)-bd_dom_sf"/>
</dbReference>
<dbReference type="InterPro" id="IPR000672">
    <property type="entry name" value="THF_DH/CycHdrlase"/>
</dbReference>
<dbReference type="InterPro" id="IPR020630">
    <property type="entry name" value="THF_DH/CycHdrlase_cat_dom"/>
</dbReference>
<dbReference type="InterPro" id="IPR020631">
    <property type="entry name" value="THF_DH/CycHdrlase_NAD-bd_dom"/>
</dbReference>
<dbReference type="NCBIfam" id="NF010789">
    <property type="entry name" value="PRK14193.1"/>
    <property type="match status" value="1"/>
</dbReference>
<dbReference type="PANTHER" id="PTHR48099:SF5">
    <property type="entry name" value="C-1-TETRAHYDROFOLATE SYNTHASE, CYTOPLASMIC"/>
    <property type="match status" value="1"/>
</dbReference>
<dbReference type="PANTHER" id="PTHR48099">
    <property type="entry name" value="C-1-TETRAHYDROFOLATE SYNTHASE, CYTOPLASMIC-RELATED"/>
    <property type="match status" value="1"/>
</dbReference>
<dbReference type="Pfam" id="PF00763">
    <property type="entry name" value="THF_DHG_CYH"/>
    <property type="match status" value="1"/>
</dbReference>
<dbReference type="Pfam" id="PF02882">
    <property type="entry name" value="THF_DHG_CYH_C"/>
    <property type="match status" value="1"/>
</dbReference>
<dbReference type="PRINTS" id="PR00085">
    <property type="entry name" value="THFDHDRGNASE"/>
</dbReference>
<dbReference type="SUPFAM" id="SSF53223">
    <property type="entry name" value="Aminoacid dehydrogenase-like, N-terminal domain"/>
    <property type="match status" value="1"/>
</dbReference>
<dbReference type="SUPFAM" id="SSF51735">
    <property type="entry name" value="NAD(P)-binding Rossmann-fold domains"/>
    <property type="match status" value="1"/>
</dbReference>
<evidence type="ECO:0000255" key="1">
    <source>
        <dbReference type="HAMAP-Rule" id="MF_01576"/>
    </source>
</evidence>
<feature type="chain" id="PRO_1000185622" description="Bifunctional protein FolD">
    <location>
        <begin position="1"/>
        <end position="281"/>
    </location>
</feature>
<feature type="binding site" evidence="1">
    <location>
        <begin position="165"/>
        <end position="167"/>
    </location>
    <ligand>
        <name>NADP(+)</name>
        <dbReference type="ChEBI" id="CHEBI:58349"/>
    </ligand>
</feature>
<feature type="binding site" evidence="1">
    <location>
        <position position="192"/>
    </location>
    <ligand>
        <name>NADP(+)</name>
        <dbReference type="ChEBI" id="CHEBI:58349"/>
    </ligand>
</feature>
<feature type="binding site" evidence="1">
    <location>
        <position position="233"/>
    </location>
    <ligand>
        <name>NADP(+)</name>
        <dbReference type="ChEBI" id="CHEBI:58349"/>
    </ligand>
</feature>
<proteinExistence type="inferred from homology"/>